<proteinExistence type="inferred from homology"/>
<organism>
    <name type="scientific">Bacillus amyloliquefaciens</name>
    <name type="common">Bacillus velezensis</name>
    <dbReference type="NCBI Taxonomy" id="1390"/>
    <lineage>
        <taxon>Bacteria</taxon>
        <taxon>Bacillati</taxon>
        <taxon>Bacillota</taxon>
        <taxon>Bacilli</taxon>
        <taxon>Bacillales</taxon>
        <taxon>Bacillaceae</taxon>
        <taxon>Bacillus</taxon>
        <taxon>Bacillus amyloliquefaciens group</taxon>
    </lineage>
</organism>
<sequence>IHSADPKDPTYNTFAAALNFIGSDNALKLIVAVLAGFIAMSIADRPGFAPGMVGGFMATQANAGFLGGLIAGFLAGYVVILLKKLFVFIPQSLDGLKPVLIYPLLGIFITGVLMQFVINTPVAAFMNFLTNWLESLGTGNLVLMGIILGGMMAIDMGGPLNKAAFTFGIAMIDAGNYAPHAAIMAGGMVPPLGIALATTFFRHKFSKRDREAGITCYFMGAAFVTEGAIPFAAADLRVIPAAVIGSAVAGGLTEFFRVTLPAPHGGVFVAFITNHPLLYLLSIVIGAIVTAVILGIIKKPVEEK</sequence>
<gene>
    <name type="primary">fruA</name>
</gene>
<keyword id="KW-1003">Cell membrane</keyword>
<keyword id="KW-0472">Membrane</keyword>
<keyword id="KW-0598">Phosphotransferase system</keyword>
<keyword id="KW-0762">Sugar transport</keyword>
<keyword id="KW-0812">Transmembrane</keyword>
<keyword id="KW-1133">Transmembrane helix</keyword>
<keyword id="KW-0813">Transport</keyword>
<protein>
    <recommendedName>
        <fullName>Fructose permease IIC component</fullName>
    </recommendedName>
    <alternativeName>
        <fullName>PTS system fructose-specific EIIC component</fullName>
    </alternativeName>
</protein>
<dbReference type="EMBL" id="Z33640">
    <property type="protein sequence ID" value="CAA83920.1"/>
    <property type="molecule type" value="Genomic_DNA"/>
</dbReference>
<dbReference type="PIR" id="S59965">
    <property type="entry name" value="S59965"/>
</dbReference>
<dbReference type="STRING" id="692420.BAMF_1514"/>
<dbReference type="eggNOG" id="COG1299">
    <property type="taxonomic scope" value="Bacteria"/>
</dbReference>
<dbReference type="eggNOG" id="COG1445">
    <property type="taxonomic scope" value="Bacteria"/>
</dbReference>
<dbReference type="eggNOG" id="COG1762">
    <property type="taxonomic scope" value="Bacteria"/>
</dbReference>
<dbReference type="GO" id="GO:0005886">
    <property type="term" value="C:plasma membrane"/>
    <property type="evidence" value="ECO:0007669"/>
    <property type="project" value="UniProtKB-SubCell"/>
</dbReference>
<dbReference type="GO" id="GO:0005351">
    <property type="term" value="F:carbohydrate:proton symporter activity"/>
    <property type="evidence" value="ECO:0007669"/>
    <property type="project" value="InterPro"/>
</dbReference>
<dbReference type="GO" id="GO:0008982">
    <property type="term" value="F:protein-N(PI)-phosphohistidine-sugar phosphotransferase activity"/>
    <property type="evidence" value="ECO:0007669"/>
    <property type="project" value="InterPro"/>
</dbReference>
<dbReference type="GO" id="GO:0090563">
    <property type="term" value="F:protein-phosphocysteine-sugar phosphotransferase activity"/>
    <property type="evidence" value="ECO:0007669"/>
    <property type="project" value="TreeGrafter"/>
</dbReference>
<dbReference type="GO" id="GO:0009401">
    <property type="term" value="P:phosphoenolpyruvate-dependent sugar phosphotransferase system"/>
    <property type="evidence" value="ECO:0007669"/>
    <property type="project" value="UniProtKB-KW"/>
</dbReference>
<dbReference type="InterPro" id="IPR050864">
    <property type="entry name" value="Bacterial_PTS_Sugar_Transport"/>
</dbReference>
<dbReference type="InterPro" id="IPR003352">
    <property type="entry name" value="PTS_EIIC"/>
</dbReference>
<dbReference type="InterPro" id="IPR013014">
    <property type="entry name" value="PTS_EIIC_2"/>
</dbReference>
<dbReference type="InterPro" id="IPR006327">
    <property type="entry name" value="PTS_IIC_fruc"/>
</dbReference>
<dbReference type="NCBIfam" id="TIGR01427">
    <property type="entry name" value="PTS_IIC_fructo"/>
    <property type="match status" value="1"/>
</dbReference>
<dbReference type="PANTHER" id="PTHR30505">
    <property type="entry name" value="FRUCTOSE-LIKE PERMEASE"/>
    <property type="match status" value="1"/>
</dbReference>
<dbReference type="PANTHER" id="PTHR30505:SF28">
    <property type="entry name" value="PTS SYSTEM 2-O-ALPHA-MANNOSYL-D-GLYCERATE-SPECIFIC EIIABC COMPONENT"/>
    <property type="match status" value="1"/>
</dbReference>
<dbReference type="Pfam" id="PF02378">
    <property type="entry name" value="PTS_EIIC"/>
    <property type="match status" value="1"/>
</dbReference>
<dbReference type="PROSITE" id="PS51104">
    <property type="entry name" value="PTS_EIIC_TYPE_2"/>
    <property type="match status" value="1"/>
</dbReference>
<feature type="chain" id="PRO_0000186507" description="Fructose permease IIC component">
    <location>
        <begin position="1" status="less than"/>
        <end position="304"/>
    </location>
</feature>
<feature type="transmembrane region" description="Helical" evidence="2">
    <location>
        <begin position="20"/>
        <end position="40"/>
    </location>
</feature>
<feature type="transmembrane region" description="Helical" evidence="2">
    <location>
        <begin position="62"/>
        <end position="82"/>
    </location>
</feature>
<feature type="transmembrane region" description="Helical" evidence="2">
    <location>
        <begin position="98"/>
        <end position="118"/>
    </location>
</feature>
<feature type="transmembrane region" description="Helical" evidence="2">
    <location>
        <begin position="140"/>
        <end position="160"/>
    </location>
</feature>
<feature type="transmembrane region" description="Helical" evidence="2">
    <location>
        <begin position="181"/>
        <end position="201"/>
    </location>
</feature>
<feature type="transmembrane region" description="Helical" evidence="2">
    <location>
        <begin position="214"/>
        <end position="234"/>
    </location>
</feature>
<feature type="transmembrane region" description="Helical" evidence="2">
    <location>
        <begin position="238"/>
        <end position="258"/>
    </location>
</feature>
<feature type="transmembrane region" description="Helical" evidence="2">
    <location>
        <begin position="277"/>
        <end position="297"/>
    </location>
</feature>
<feature type="domain" description="PTS EIIC type-2" evidence="2">
    <location>
        <begin position="1" status="less than"/>
        <end position="304"/>
    </location>
</feature>
<feature type="non-terminal residue">
    <location>
        <position position="1"/>
    </location>
</feature>
<accession>P41029</accession>
<name>PTFC_BACAM</name>
<comment type="function">
    <text evidence="1">The phosphoenolpyruvate-dependent sugar phosphotransferase system (PTS), a major carbohydrate active -transport system, catalyzes the phosphorylation of incoming sugar substrates concomitant with their translocation across the cell membrane. This system is involved in fructose transport (By similarity).</text>
</comment>
<comment type="subcellular location">
    <subcellularLocation>
        <location evidence="2">Cell membrane</location>
        <topology evidence="2">Multi-pass membrane protein</topology>
    </subcellularLocation>
</comment>
<comment type="domain">
    <text>The EIIC domain forms the PTS system translocation channel and contains the specific substrate-binding site.</text>
</comment>
<reference key="1">
    <citation type="journal article" date="1995" name="Biochim. Biophys. Acta">
        <title>Bacillus amyloliquefaciens possesses a second type I signal peptidase with extensive sequence similarity to other Bacillus SPases.</title>
        <authorList>
            <person name="Hoang V."/>
            <person name="Hofemeister J."/>
        </authorList>
    </citation>
    <scope>NUCLEOTIDE SEQUENCE [GENOMIC DNA]</scope>
    <source>
        <strain>ATCC 23844 / P</strain>
    </source>
</reference>
<evidence type="ECO:0000250" key="1"/>
<evidence type="ECO:0000255" key="2">
    <source>
        <dbReference type="PROSITE-ProRule" id="PRU00427"/>
    </source>
</evidence>